<gene>
    <name type="ordered locus">SAS1283</name>
</gene>
<evidence type="ECO:0000255" key="1">
    <source>
        <dbReference type="HAMAP-Rule" id="MF_00363"/>
    </source>
</evidence>
<reference key="1">
    <citation type="journal article" date="2004" name="Proc. Natl. Acad. Sci. U.S.A.">
        <title>Complete genomes of two clinical Staphylococcus aureus strains: evidence for the rapid evolution of virulence and drug resistance.</title>
        <authorList>
            <person name="Holden M.T.G."/>
            <person name="Feil E.J."/>
            <person name="Lindsay J.A."/>
            <person name="Peacock S.J."/>
            <person name="Day N.P.J."/>
            <person name="Enright M.C."/>
            <person name="Foster T.J."/>
            <person name="Moore C.E."/>
            <person name="Hurst L."/>
            <person name="Atkin R."/>
            <person name="Barron A."/>
            <person name="Bason N."/>
            <person name="Bentley S.D."/>
            <person name="Chillingworth C."/>
            <person name="Chillingworth T."/>
            <person name="Churcher C."/>
            <person name="Clark L."/>
            <person name="Corton C."/>
            <person name="Cronin A."/>
            <person name="Doggett J."/>
            <person name="Dowd L."/>
            <person name="Feltwell T."/>
            <person name="Hance Z."/>
            <person name="Harris B."/>
            <person name="Hauser H."/>
            <person name="Holroyd S."/>
            <person name="Jagels K."/>
            <person name="James K.D."/>
            <person name="Lennard N."/>
            <person name="Line A."/>
            <person name="Mayes R."/>
            <person name="Moule S."/>
            <person name="Mungall K."/>
            <person name="Ormond D."/>
            <person name="Quail M.A."/>
            <person name="Rabbinowitsch E."/>
            <person name="Rutherford K.M."/>
            <person name="Sanders M."/>
            <person name="Sharp S."/>
            <person name="Simmonds M."/>
            <person name="Stevens K."/>
            <person name="Whitehead S."/>
            <person name="Barrell B.G."/>
            <person name="Spratt B.G."/>
            <person name="Parkhill J."/>
        </authorList>
    </citation>
    <scope>NUCLEOTIDE SEQUENCE [LARGE SCALE GENOMIC DNA]</scope>
    <source>
        <strain>MSSA476</strain>
    </source>
</reference>
<proteinExistence type="inferred from homology"/>
<feature type="chain" id="PRO_0000214977" description="UPF0154 protein SAS1283">
    <location>
        <begin position="1"/>
        <end position="80"/>
    </location>
</feature>
<feature type="transmembrane region" description="Helical" evidence="1">
    <location>
        <begin position="4"/>
        <end position="26"/>
    </location>
</feature>
<sequence length="80" mass="9320">MATWLAIIFIVAALILGLIGGFLLARKYMMDYLKKNPPINEEMLRMMMMQMGQKPSQKKINQMMTMMNKNMDQNMKSAKK</sequence>
<accession>Q6G9L5</accession>
<keyword id="KW-0472">Membrane</keyword>
<keyword id="KW-0812">Transmembrane</keyword>
<keyword id="KW-1133">Transmembrane helix</keyword>
<protein>
    <recommendedName>
        <fullName evidence="1">UPF0154 protein SAS1283</fullName>
    </recommendedName>
</protein>
<name>Y1283_STAAS</name>
<comment type="subcellular location">
    <subcellularLocation>
        <location evidence="1">Membrane</location>
        <topology evidence="1">Single-pass membrane protein</topology>
    </subcellularLocation>
</comment>
<comment type="similarity">
    <text evidence="1">Belongs to the UPF0154 family.</text>
</comment>
<organism>
    <name type="scientific">Staphylococcus aureus (strain MSSA476)</name>
    <dbReference type="NCBI Taxonomy" id="282459"/>
    <lineage>
        <taxon>Bacteria</taxon>
        <taxon>Bacillati</taxon>
        <taxon>Bacillota</taxon>
        <taxon>Bacilli</taxon>
        <taxon>Bacillales</taxon>
        <taxon>Staphylococcaceae</taxon>
        <taxon>Staphylococcus</taxon>
    </lineage>
</organism>
<dbReference type="EMBL" id="BX571857">
    <property type="protein sequence ID" value="CAG43061.1"/>
    <property type="molecule type" value="Genomic_DNA"/>
</dbReference>
<dbReference type="RefSeq" id="WP_000246909.1">
    <property type="nucleotide sequence ID" value="NC_002953.3"/>
</dbReference>
<dbReference type="SMR" id="Q6G9L5"/>
<dbReference type="KEGG" id="sas:SAS1283"/>
<dbReference type="HOGENOM" id="CLU_180108_0_1_9"/>
<dbReference type="GO" id="GO:0005886">
    <property type="term" value="C:plasma membrane"/>
    <property type="evidence" value="ECO:0007669"/>
    <property type="project" value="UniProtKB-UniRule"/>
</dbReference>
<dbReference type="Gene3D" id="1.10.238.10">
    <property type="entry name" value="EF-hand"/>
    <property type="match status" value="1"/>
</dbReference>
<dbReference type="HAMAP" id="MF_00363">
    <property type="entry name" value="UPF0154"/>
    <property type="match status" value="1"/>
</dbReference>
<dbReference type="InterPro" id="IPR011992">
    <property type="entry name" value="EF-hand-dom_pair"/>
</dbReference>
<dbReference type="InterPro" id="IPR005359">
    <property type="entry name" value="UPF0154"/>
</dbReference>
<dbReference type="Pfam" id="PF03672">
    <property type="entry name" value="UPF0154"/>
    <property type="match status" value="1"/>
</dbReference>
<dbReference type="SUPFAM" id="SSF47473">
    <property type="entry name" value="EF-hand"/>
    <property type="match status" value="1"/>
</dbReference>